<name>ERA_STRPG</name>
<keyword id="KW-1003">Cell membrane</keyword>
<keyword id="KW-0963">Cytoplasm</keyword>
<keyword id="KW-0342">GTP-binding</keyword>
<keyword id="KW-0472">Membrane</keyword>
<keyword id="KW-0547">Nucleotide-binding</keyword>
<keyword id="KW-0690">Ribosome biogenesis</keyword>
<keyword id="KW-0694">RNA-binding</keyword>
<keyword id="KW-0699">rRNA-binding</keyword>
<reference key="1">
    <citation type="journal article" date="2007" name="J. Bacteriol.">
        <title>Complete genome of acute rheumatic fever-associated serotype M5 Streptococcus pyogenes strain Manfredo.</title>
        <authorList>
            <person name="Holden M.T.G."/>
            <person name="Scott A."/>
            <person name="Cherevach I."/>
            <person name="Chillingworth T."/>
            <person name="Churcher C."/>
            <person name="Cronin A."/>
            <person name="Dowd L."/>
            <person name="Feltwell T."/>
            <person name="Hamlin N."/>
            <person name="Holroyd S."/>
            <person name="Jagels K."/>
            <person name="Moule S."/>
            <person name="Mungall K."/>
            <person name="Quail M.A."/>
            <person name="Price C."/>
            <person name="Rabbinowitsch E."/>
            <person name="Sharp S."/>
            <person name="Skelton J."/>
            <person name="Whitehead S."/>
            <person name="Barrell B.G."/>
            <person name="Kehoe M."/>
            <person name="Parkhill J."/>
        </authorList>
    </citation>
    <scope>NUCLEOTIDE SEQUENCE [LARGE SCALE GENOMIC DNA]</scope>
    <source>
        <strain>Manfredo</strain>
    </source>
</reference>
<accession>A2RG20</accession>
<comment type="function">
    <text evidence="1">An essential GTPase that binds both GDP and GTP, with rapid nucleotide exchange. Plays a role in 16S rRNA processing and 30S ribosomal subunit biogenesis and possibly also in cell cycle regulation and energy metabolism.</text>
</comment>
<comment type="subunit">
    <text evidence="1">Monomer.</text>
</comment>
<comment type="subcellular location">
    <subcellularLocation>
        <location>Cytoplasm</location>
    </subcellularLocation>
    <subcellularLocation>
        <location evidence="1">Cell membrane</location>
        <topology evidence="1">Peripheral membrane protein</topology>
    </subcellularLocation>
</comment>
<comment type="similarity">
    <text evidence="1 2">Belongs to the TRAFAC class TrmE-Era-EngA-EngB-Septin-like GTPase superfamily. Era GTPase family.</text>
</comment>
<sequence>MFKSGFVAILGRPNVGKSTFLNHVMGQKIAIMSDKAQTTRNKIMGIYTTETEQIVFIDTPGIHKPKTALGDFMVESAYSTLREVETVLFMVPADEKRGKGDDMIIERLKAAKIPVILVINKIDKVHPDQLLEQIDDFRSQMDFKEVVPISALEGNNVPTLIKLLTDNLEEGFQYFPEDQITDHPERFLVSEMVREKVLHLTQQEVPHSVAVVVESMKRDEETDKVHIRATIMVERDSQKGIIIGKQGAMLKKIGKMARRDIELMLGDKVYLETWVKVKKNWRDKKLDLADFGYNEKEY</sequence>
<evidence type="ECO:0000255" key="1">
    <source>
        <dbReference type="HAMAP-Rule" id="MF_00367"/>
    </source>
</evidence>
<evidence type="ECO:0000255" key="2">
    <source>
        <dbReference type="PROSITE-ProRule" id="PRU01050"/>
    </source>
</evidence>
<dbReference type="EMBL" id="AM295007">
    <property type="protein sequence ID" value="CAM30799.1"/>
    <property type="molecule type" value="Genomic_DNA"/>
</dbReference>
<dbReference type="RefSeq" id="WP_002985743.1">
    <property type="nucleotide sequence ID" value="NC_009332.1"/>
</dbReference>
<dbReference type="SMR" id="A2RG20"/>
<dbReference type="GeneID" id="69901289"/>
<dbReference type="KEGG" id="spf:SpyM51478"/>
<dbReference type="HOGENOM" id="CLU_038009_1_0_9"/>
<dbReference type="GO" id="GO:0005829">
    <property type="term" value="C:cytosol"/>
    <property type="evidence" value="ECO:0007669"/>
    <property type="project" value="TreeGrafter"/>
</dbReference>
<dbReference type="GO" id="GO:0005886">
    <property type="term" value="C:plasma membrane"/>
    <property type="evidence" value="ECO:0007669"/>
    <property type="project" value="UniProtKB-SubCell"/>
</dbReference>
<dbReference type="GO" id="GO:0005525">
    <property type="term" value="F:GTP binding"/>
    <property type="evidence" value="ECO:0007669"/>
    <property type="project" value="UniProtKB-UniRule"/>
</dbReference>
<dbReference type="GO" id="GO:0003924">
    <property type="term" value="F:GTPase activity"/>
    <property type="evidence" value="ECO:0007669"/>
    <property type="project" value="UniProtKB-UniRule"/>
</dbReference>
<dbReference type="GO" id="GO:0043024">
    <property type="term" value="F:ribosomal small subunit binding"/>
    <property type="evidence" value="ECO:0007669"/>
    <property type="project" value="TreeGrafter"/>
</dbReference>
<dbReference type="GO" id="GO:0070181">
    <property type="term" value="F:small ribosomal subunit rRNA binding"/>
    <property type="evidence" value="ECO:0007669"/>
    <property type="project" value="UniProtKB-UniRule"/>
</dbReference>
<dbReference type="GO" id="GO:0000028">
    <property type="term" value="P:ribosomal small subunit assembly"/>
    <property type="evidence" value="ECO:0007669"/>
    <property type="project" value="TreeGrafter"/>
</dbReference>
<dbReference type="CDD" id="cd04163">
    <property type="entry name" value="Era"/>
    <property type="match status" value="1"/>
</dbReference>
<dbReference type="CDD" id="cd22534">
    <property type="entry name" value="KH-II_Era"/>
    <property type="match status" value="1"/>
</dbReference>
<dbReference type="FunFam" id="3.30.300.20:FF:000003">
    <property type="entry name" value="GTPase Era"/>
    <property type="match status" value="1"/>
</dbReference>
<dbReference type="FunFam" id="3.40.50.300:FF:000094">
    <property type="entry name" value="GTPase Era"/>
    <property type="match status" value="1"/>
</dbReference>
<dbReference type="Gene3D" id="3.30.300.20">
    <property type="match status" value="1"/>
</dbReference>
<dbReference type="Gene3D" id="3.40.50.300">
    <property type="entry name" value="P-loop containing nucleotide triphosphate hydrolases"/>
    <property type="match status" value="1"/>
</dbReference>
<dbReference type="HAMAP" id="MF_00367">
    <property type="entry name" value="GTPase_Era"/>
    <property type="match status" value="1"/>
</dbReference>
<dbReference type="InterPro" id="IPR030388">
    <property type="entry name" value="G_ERA_dom"/>
</dbReference>
<dbReference type="InterPro" id="IPR006073">
    <property type="entry name" value="GTP-bd"/>
</dbReference>
<dbReference type="InterPro" id="IPR005662">
    <property type="entry name" value="GTPase_Era-like"/>
</dbReference>
<dbReference type="InterPro" id="IPR015946">
    <property type="entry name" value="KH_dom-like_a/b"/>
</dbReference>
<dbReference type="InterPro" id="IPR004044">
    <property type="entry name" value="KH_dom_type_2"/>
</dbReference>
<dbReference type="InterPro" id="IPR009019">
    <property type="entry name" value="KH_sf_prok-type"/>
</dbReference>
<dbReference type="InterPro" id="IPR027417">
    <property type="entry name" value="P-loop_NTPase"/>
</dbReference>
<dbReference type="InterPro" id="IPR005225">
    <property type="entry name" value="Small_GTP-bd"/>
</dbReference>
<dbReference type="NCBIfam" id="TIGR00436">
    <property type="entry name" value="era"/>
    <property type="match status" value="1"/>
</dbReference>
<dbReference type="NCBIfam" id="NF000908">
    <property type="entry name" value="PRK00089.1"/>
    <property type="match status" value="1"/>
</dbReference>
<dbReference type="NCBIfam" id="TIGR00231">
    <property type="entry name" value="small_GTP"/>
    <property type="match status" value="1"/>
</dbReference>
<dbReference type="PANTHER" id="PTHR42698">
    <property type="entry name" value="GTPASE ERA"/>
    <property type="match status" value="1"/>
</dbReference>
<dbReference type="PANTHER" id="PTHR42698:SF1">
    <property type="entry name" value="GTPASE ERA, MITOCHONDRIAL"/>
    <property type="match status" value="1"/>
</dbReference>
<dbReference type="Pfam" id="PF07650">
    <property type="entry name" value="KH_2"/>
    <property type="match status" value="1"/>
</dbReference>
<dbReference type="Pfam" id="PF01926">
    <property type="entry name" value="MMR_HSR1"/>
    <property type="match status" value="1"/>
</dbReference>
<dbReference type="SUPFAM" id="SSF52540">
    <property type="entry name" value="P-loop containing nucleoside triphosphate hydrolases"/>
    <property type="match status" value="1"/>
</dbReference>
<dbReference type="SUPFAM" id="SSF54814">
    <property type="entry name" value="Prokaryotic type KH domain (KH-domain type II)"/>
    <property type="match status" value="1"/>
</dbReference>
<dbReference type="PROSITE" id="PS51713">
    <property type="entry name" value="G_ERA"/>
    <property type="match status" value="1"/>
</dbReference>
<dbReference type="PROSITE" id="PS50823">
    <property type="entry name" value="KH_TYPE_2"/>
    <property type="match status" value="1"/>
</dbReference>
<feature type="chain" id="PRO_1000079755" description="GTPase Era">
    <location>
        <begin position="1"/>
        <end position="298"/>
    </location>
</feature>
<feature type="domain" description="Era-type G" evidence="2">
    <location>
        <begin position="3"/>
        <end position="170"/>
    </location>
</feature>
<feature type="domain" description="KH type-2" evidence="1">
    <location>
        <begin position="201"/>
        <end position="279"/>
    </location>
</feature>
<feature type="region of interest" description="G1" evidence="2">
    <location>
        <begin position="11"/>
        <end position="18"/>
    </location>
</feature>
<feature type="region of interest" description="G2" evidence="2">
    <location>
        <begin position="37"/>
        <end position="41"/>
    </location>
</feature>
<feature type="region of interest" description="G3" evidence="2">
    <location>
        <begin position="58"/>
        <end position="61"/>
    </location>
</feature>
<feature type="region of interest" description="G4" evidence="2">
    <location>
        <begin position="120"/>
        <end position="123"/>
    </location>
</feature>
<feature type="region of interest" description="G5" evidence="2">
    <location>
        <begin position="149"/>
        <end position="151"/>
    </location>
</feature>
<feature type="binding site" evidence="1">
    <location>
        <begin position="11"/>
        <end position="18"/>
    </location>
    <ligand>
        <name>GTP</name>
        <dbReference type="ChEBI" id="CHEBI:37565"/>
    </ligand>
</feature>
<feature type="binding site" evidence="1">
    <location>
        <begin position="58"/>
        <end position="62"/>
    </location>
    <ligand>
        <name>GTP</name>
        <dbReference type="ChEBI" id="CHEBI:37565"/>
    </ligand>
</feature>
<feature type="binding site" evidence="1">
    <location>
        <begin position="120"/>
        <end position="123"/>
    </location>
    <ligand>
        <name>GTP</name>
        <dbReference type="ChEBI" id="CHEBI:37565"/>
    </ligand>
</feature>
<organism>
    <name type="scientific">Streptococcus pyogenes serotype M5 (strain Manfredo)</name>
    <dbReference type="NCBI Taxonomy" id="160491"/>
    <lineage>
        <taxon>Bacteria</taxon>
        <taxon>Bacillati</taxon>
        <taxon>Bacillota</taxon>
        <taxon>Bacilli</taxon>
        <taxon>Lactobacillales</taxon>
        <taxon>Streptococcaceae</taxon>
        <taxon>Streptococcus</taxon>
    </lineage>
</organism>
<gene>
    <name evidence="1" type="primary">era</name>
    <name type="ordered locus">SpyM51478</name>
</gene>
<proteinExistence type="inferred from homology"/>
<protein>
    <recommendedName>
        <fullName evidence="1">GTPase Era</fullName>
    </recommendedName>
</protein>